<name>TRMA_CAMJJ</name>
<sequence length="357" mass="42306">MSLENFGNFLTLDEKHSFIKKYFKEFYTKDFKLFTSKDKHYRTRAELSFYHENDTLFYAMFDPKSKKKYIIEYLDFADEKICAFMPKLLEYLRQDDKLKEKLFGVEFLTTKQELSVTLLYHKNIEDIKSNLENLSNNLHINLIARSKGKKLIFKTENLRQTLNIQDRKIFYEFNNDCFIQPNTAINEKMITWVCEILNTQKRMDLLELYCGYGNFTLALAPFFFKVLATEISKSNINFALKNCELNNTTNIHFARLSSEELSLAIKKEREFFRLKDIRLDDFNFSHVLVDPPRAGLDKSVIDLIKKYENIIYISCNPITLKENLKELSLTHRVEEFALFDQFVNTPHLECGVFLSKV</sequence>
<proteinExistence type="inferred from homology"/>
<dbReference type="EC" id="2.1.1.-" evidence="1"/>
<dbReference type="EC" id="2.1.1.35" evidence="1"/>
<dbReference type="EMBL" id="CP000538">
    <property type="protein sequence ID" value="EAQ72311.1"/>
    <property type="molecule type" value="Genomic_DNA"/>
</dbReference>
<dbReference type="RefSeq" id="WP_002868806.1">
    <property type="nucleotide sequence ID" value="NC_008787.1"/>
</dbReference>
<dbReference type="SMR" id="A1VZH5"/>
<dbReference type="KEGG" id="cjj:CJJ81176_0848"/>
<dbReference type="eggNOG" id="COG2265">
    <property type="taxonomic scope" value="Bacteria"/>
</dbReference>
<dbReference type="HOGENOM" id="CLU_043022_1_0_7"/>
<dbReference type="Proteomes" id="UP000000646">
    <property type="component" value="Chromosome"/>
</dbReference>
<dbReference type="GO" id="GO:0005829">
    <property type="term" value="C:cytosol"/>
    <property type="evidence" value="ECO:0007669"/>
    <property type="project" value="TreeGrafter"/>
</dbReference>
<dbReference type="GO" id="GO:0019843">
    <property type="term" value="F:rRNA binding"/>
    <property type="evidence" value="ECO:0007669"/>
    <property type="project" value="TreeGrafter"/>
</dbReference>
<dbReference type="GO" id="GO:0030697">
    <property type="term" value="F:tRNA (uracil(54)-C5)-methyltransferase activity, S-adenosyl methionine-dependent"/>
    <property type="evidence" value="ECO:0007669"/>
    <property type="project" value="UniProtKB-EC"/>
</dbReference>
<dbReference type="GO" id="GO:0000049">
    <property type="term" value="F:tRNA binding"/>
    <property type="evidence" value="ECO:0007669"/>
    <property type="project" value="TreeGrafter"/>
</dbReference>
<dbReference type="GO" id="GO:0032259">
    <property type="term" value="P:methylation"/>
    <property type="evidence" value="ECO:0007669"/>
    <property type="project" value="UniProtKB-KW"/>
</dbReference>
<dbReference type="GO" id="GO:0008033">
    <property type="term" value="P:tRNA processing"/>
    <property type="evidence" value="ECO:0007669"/>
    <property type="project" value="UniProtKB-KW"/>
</dbReference>
<dbReference type="CDD" id="cd02440">
    <property type="entry name" value="AdoMet_MTases"/>
    <property type="match status" value="1"/>
</dbReference>
<dbReference type="FunFam" id="3.40.50.150:FF:000012">
    <property type="entry name" value="tRNA/tmRNA (uracil-C(5))-methyltransferase"/>
    <property type="match status" value="1"/>
</dbReference>
<dbReference type="Gene3D" id="2.40.50.1070">
    <property type="match status" value="1"/>
</dbReference>
<dbReference type="Gene3D" id="3.40.50.150">
    <property type="entry name" value="Vaccinia Virus protein VP39"/>
    <property type="match status" value="1"/>
</dbReference>
<dbReference type="HAMAP" id="MF_01011">
    <property type="entry name" value="RNA_methyltr_TrmA"/>
    <property type="match status" value="1"/>
</dbReference>
<dbReference type="InterPro" id="IPR030390">
    <property type="entry name" value="MeTrfase_TrmA_AS"/>
</dbReference>
<dbReference type="InterPro" id="IPR029063">
    <property type="entry name" value="SAM-dependent_MTases_sf"/>
</dbReference>
<dbReference type="InterPro" id="IPR011869">
    <property type="entry name" value="TrmA_MeTrfase"/>
</dbReference>
<dbReference type="InterPro" id="IPR010280">
    <property type="entry name" value="U5_MeTrfase_fam"/>
</dbReference>
<dbReference type="NCBIfam" id="TIGR02143">
    <property type="entry name" value="trmA_only"/>
    <property type="match status" value="1"/>
</dbReference>
<dbReference type="PANTHER" id="PTHR47790">
    <property type="entry name" value="TRNA/TMRNA (URACIL-C(5))-METHYLTRANSFERASE"/>
    <property type="match status" value="1"/>
</dbReference>
<dbReference type="PANTHER" id="PTHR47790:SF2">
    <property type="entry name" value="TRNA_TMRNA (URACIL-C(5))-METHYLTRANSFERASE"/>
    <property type="match status" value="1"/>
</dbReference>
<dbReference type="Pfam" id="PF05958">
    <property type="entry name" value="tRNA_U5-meth_tr"/>
    <property type="match status" value="1"/>
</dbReference>
<dbReference type="SUPFAM" id="SSF53335">
    <property type="entry name" value="S-adenosyl-L-methionine-dependent methyltransferases"/>
    <property type="match status" value="1"/>
</dbReference>
<dbReference type="PROSITE" id="PS51687">
    <property type="entry name" value="SAM_MT_RNA_M5U"/>
    <property type="match status" value="1"/>
</dbReference>
<dbReference type="PROSITE" id="PS01230">
    <property type="entry name" value="TRMA_1"/>
    <property type="match status" value="1"/>
</dbReference>
<accession>A1VZH5</accession>
<evidence type="ECO:0000255" key="1">
    <source>
        <dbReference type="HAMAP-Rule" id="MF_01011"/>
    </source>
</evidence>
<protein>
    <recommendedName>
        <fullName evidence="1">tRNA/tmRNA (uracil-C(5))-methyltransferase</fullName>
        <ecNumber evidence="1">2.1.1.-</ecNumber>
        <ecNumber evidence="1">2.1.1.35</ecNumber>
    </recommendedName>
    <alternativeName>
        <fullName evidence="1">tRNA (uracil(54)-C(5))-methyltransferase</fullName>
    </alternativeName>
    <alternativeName>
        <fullName evidence="1">tRNA(m5U54)-methyltransferase</fullName>
        <shortName evidence="1">RUMT</shortName>
    </alternativeName>
    <alternativeName>
        <fullName evidence="1">tmRNA (uracil(341)-C(5))-methyltransferase</fullName>
    </alternativeName>
</protein>
<comment type="function">
    <text evidence="1">Dual-specificity methyltransferase that catalyzes the formation of 5-methyluridine at position 54 (m5U54) in all tRNAs, and that of position 341 (m5U341) in tmRNA (transfer-mRNA).</text>
</comment>
<comment type="catalytic activity">
    <reaction evidence="1">
        <text>uridine(54) in tRNA + S-adenosyl-L-methionine = 5-methyluridine(54) in tRNA + S-adenosyl-L-homocysteine + H(+)</text>
        <dbReference type="Rhea" id="RHEA:42712"/>
        <dbReference type="Rhea" id="RHEA-COMP:10167"/>
        <dbReference type="Rhea" id="RHEA-COMP:10193"/>
        <dbReference type="ChEBI" id="CHEBI:15378"/>
        <dbReference type="ChEBI" id="CHEBI:57856"/>
        <dbReference type="ChEBI" id="CHEBI:59789"/>
        <dbReference type="ChEBI" id="CHEBI:65315"/>
        <dbReference type="ChEBI" id="CHEBI:74447"/>
        <dbReference type="EC" id="2.1.1.35"/>
    </reaction>
</comment>
<comment type="catalytic activity">
    <reaction evidence="1">
        <text>uridine(341) in tmRNA + S-adenosyl-L-methionine = 5-methyluridine(341) in tmRNA + S-adenosyl-L-homocysteine + H(+)</text>
        <dbReference type="Rhea" id="RHEA:43612"/>
        <dbReference type="Rhea" id="RHEA-COMP:10630"/>
        <dbReference type="Rhea" id="RHEA-COMP:10631"/>
        <dbReference type="ChEBI" id="CHEBI:15378"/>
        <dbReference type="ChEBI" id="CHEBI:57856"/>
        <dbReference type="ChEBI" id="CHEBI:59789"/>
        <dbReference type="ChEBI" id="CHEBI:65315"/>
        <dbReference type="ChEBI" id="CHEBI:74447"/>
    </reaction>
</comment>
<comment type="similarity">
    <text evidence="1">Belongs to the class I-like SAM-binding methyltransferase superfamily. RNA M5U methyltransferase family. TrmA subfamily.</text>
</comment>
<keyword id="KW-0489">Methyltransferase</keyword>
<keyword id="KW-0949">S-adenosyl-L-methionine</keyword>
<keyword id="KW-0808">Transferase</keyword>
<keyword id="KW-0819">tRNA processing</keyword>
<gene>
    <name evidence="1" type="primary">trmA</name>
    <name type="ordered locus">CJJ81176_0848</name>
</gene>
<reference key="1">
    <citation type="submission" date="2006-12" db="EMBL/GenBank/DDBJ databases">
        <authorList>
            <person name="Fouts D.E."/>
            <person name="Nelson K.E."/>
            <person name="Sebastian Y."/>
        </authorList>
    </citation>
    <scope>NUCLEOTIDE SEQUENCE [LARGE SCALE GENOMIC DNA]</scope>
    <source>
        <strain>81-176</strain>
    </source>
</reference>
<organism>
    <name type="scientific">Campylobacter jejuni subsp. jejuni serotype O:23/36 (strain 81-176)</name>
    <dbReference type="NCBI Taxonomy" id="354242"/>
    <lineage>
        <taxon>Bacteria</taxon>
        <taxon>Pseudomonadati</taxon>
        <taxon>Campylobacterota</taxon>
        <taxon>Epsilonproteobacteria</taxon>
        <taxon>Campylobacterales</taxon>
        <taxon>Campylobacteraceae</taxon>
        <taxon>Campylobacter</taxon>
    </lineage>
</organism>
<feature type="chain" id="PRO_0000281437" description="tRNA/tmRNA (uracil-C(5))-methyltransferase">
    <location>
        <begin position="1"/>
        <end position="357"/>
    </location>
</feature>
<feature type="active site" description="Nucleophile" evidence="1">
    <location>
        <position position="315"/>
    </location>
</feature>
<feature type="active site" description="Proton acceptor" evidence="1">
    <location>
        <position position="349"/>
    </location>
</feature>
<feature type="binding site" evidence="1">
    <location>
        <position position="180"/>
    </location>
    <ligand>
        <name>S-adenosyl-L-methionine</name>
        <dbReference type="ChEBI" id="CHEBI:59789"/>
    </ligand>
</feature>
<feature type="binding site" evidence="1">
    <location>
        <position position="209"/>
    </location>
    <ligand>
        <name>S-adenosyl-L-methionine</name>
        <dbReference type="ChEBI" id="CHEBI:59789"/>
    </ligand>
</feature>
<feature type="binding site" evidence="1">
    <location>
        <position position="214"/>
    </location>
    <ligand>
        <name>S-adenosyl-L-methionine</name>
        <dbReference type="ChEBI" id="CHEBI:59789"/>
    </ligand>
</feature>
<feature type="binding site" evidence="1">
    <location>
        <position position="230"/>
    </location>
    <ligand>
        <name>S-adenosyl-L-methionine</name>
        <dbReference type="ChEBI" id="CHEBI:59789"/>
    </ligand>
</feature>
<feature type="binding site" evidence="1">
    <location>
        <position position="290"/>
    </location>
    <ligand>
        <name>S-adenosyl-L-methionine</name>
        <dbReference type="ChEBI" id="CHEBI:59789"/>
    </ligand>
</feature>